<protein>
    <recommendedName>
        <fullName evidence="1">Urease accessory protein UreG</fullName>
    </recommendedName>
</protein>
<comment type="function">
    <text evidence="1">Facilitates the functional incorporation of the urease nickel metallocenter. This process requires GTP hydrolysis, probably effectuated by UreG.</text>
</comment>
<comment type="subunit">
    <text evidence="1">Homodimer. UreD, UreF and UreG form a complex that acts as a GTP-hydrolysis-dependent molecular chaperone, activating the urease apoprotein by helping to assemble the nickel containing metallocenter of UreC. The UreE protein probably delivers the nickel.</text>
</comment>
<comment type="subcellular location">
    <subcellularLocation>
        <location evidence="1">Cytoplasm</location>
    </subcellularLocation>
</comment>
<comment type="similarity">
    <text evidence="1">Belongs to the SIMIBI class G3E GTPase family. UreG subfamily.</text>
</comment>
<reference key="1">
    <citation type="submission" date="2007-06" db="EMBL/GenBank/DDBJ databases">
        <authorList>
            <person name="Dodson R.J."/>
            <person name="Harkins D."/>
            <person name="Paulsen I.T."/>
        </authorList>
    </citation>
    <scope>NUCLEOTIDE SEQUENCE [LARGE SCALE GENOMIC DNA]</scope>
    <source>
        <strain>DSM 24068 / PA7</strain>
    </source>
</reference>
<dbReference type="EMBL" id="CP000744">
    <property type="protein sequence ID" value="ABR80904.1"/>
    <property type="molecule type" value="Genomic_DNA"/>
</dbReference>
<dbReference type="RefSeq" id="WP_003157212.1">
    <property type="nucleotide sequence ID" value="NC_009656.1"/>
</dbReference>
<dbReference type="SMR" id="A6VD02"/>
<dbReference type="GeneID" id="77223441"/>
<dbReference type="KEGG" id="pap:PSPA7_5616"/>
<dbReference type="HOGENOM" id="CLU_072144_1_0_6"/>
<dbReference type="Proteomes" id="UP000001582">
    <property type="component" value="Chromosome"/>
</dbReference>
<dbReference type="GO" id="GO:0005737">
    <property type="term" value="C:cytoplasm"/>
    <property type="evidence" value="ECO:0007669"/>
    <property type="project" value="UniProtKB-SubCell"/>
</dbReference>
<dbReference type="GO" id="GO:0016887">
    <property type="term" value="F:ATP hydrolysis activity"/>
    <property type="evidence" value="ECO:0007669"/>
    <property type="project" value="InterPro"/>
</dbReference>
<dbReference type="GO" id="GO:0005525">
    <property type="term" value="F:GTP binding"/>
    <property type="evidence" value="ECO:0007669"/>
    <property type="project" value="UniProtKB-KW"/>
</dbReference>
<dbReference type="GO" id="GO:0003924">
    <property type="term" value="F:GTPase activity"/>
    <property type="evidence" value="ECO:0007669"/>
    <property type="project" value="InterPro"/>
</dbReference>
<dbReference type="GO" id="GO:0016151">
    <property type="term" value="F:nickel cation binding"/>
    <property type="evidence" value="ECO:0007669"/>
    <property type="project" value="UniProtKB-UniRule"/>
</dbReference>
<dbReference type="GO" id="GO:0043419">
    <property type="term" value="P:urea catabolic process"/>
    <property type="evidence" value="ECO:0007669"/>
    <property type="project" value="InterPro"/>
</dbReference>
<dbReference type="CDD" id="cd05540">
    <property type="entry name" value="UreG"/>
    <property type="match status" value="1"/>
</dbReference>
<dbReference type="FunFam" id="3.40.50.300:FF:000208">
    <property type="entry name" value="Urease accessory protein UreG"/>
    <property type="match status" value="1"/>
</dbReference>
<dbReference type="Gene3D" id="3.40.50.300">
    <property type="entry name" value="P-loop containing nucleotide triphosphate hydrolases"/>
    <property type="match status" value="1"/>
</dbReference>
<dbReference type="HAMAP" id="MF_01389">
    <property type="entry name" value="UreG"/>
    <property type="match status" value="1"/>
</dbReference>
<dbReference type="InterPro" id="IPR003593">
    <property type="entry name" value="AAA+_ATPase"/>
</dbReference>
<dbReference type="InterPro" id="IPR003495">
    <property type="entry name" value="CobW/HypB/UreG_nucleotide-bd"/>
</dbReference>
<dbReference type="InterPro" id="IPR027417">
    <property type="entry name" value="P-loop_NTPase"/>
</dbReference>
<dbReference type="InterPro" id="IPR004400">
    <property type="entry name" value="UreG"/>
</dbReference>
<dbReference type="NCBIfam" id="TIGR00101">
    <property type="entry name" value="ureG"/>
    <property type="match status" value="1"/>
</dbReference>
<dbReference type="PANTHER" id="PTHR31715">
    <property type="entry name" value="UREASE ACCESSORY PROTEIN G"/>
    <property type="match status" value="1"/>
</dbReference>
<dbReference type="PANTHER" id="PTHR31715:SF0">
    <property type="entry name" value="UREASE ACCESSORY PROTEIN G"/>
    <property type="match status" value="1"/>
</dbReference>
<dbReference type="Pfam" id="PF02492">
    <property type="entry name" value="cobW"/>
    <property type="match status" value="1"/>
</dbReference>
<dbReference type="PIRSF" id="PIRSF005624">
    <property type="entry name" value="Ni-bind_GTPase"/>
    <property type="match status" value="1"/>
</dbReference>
<dbReference type="SMART" id="SM00382">
    <property type="entry name" value="AAA"/>
    <property type="match status" value="1"/>
</dbReference>
<dbReference type="SUPFAM" id="SSF52540">
    <property type="entry name" value="P-loop containing nucleoside triphosphate hydrolases"/>
    <property type="match status" value="1"/>
</dbReference>
<sequence>MTSQPLRVGIGGPVGSGKTALTLALCRELRERYNLAVVTNDIYTQEDAQFLVRNEALAPERIIGVETGGCPHTAIREDASINLEAVDQLNRRFPGLELILVESGGDNLSATFSPELSDLTLYVIDVSAGDKIPRKGGPGICKSDLLVINKIDLAPLVGASLEVMDEDARRMRGDKPFVFSNQKTGQGLAEIIAFIERQGLLTAA</sequence>
<proteinExistence type="inferred from homology"/>
<name>UREG_PSEP7</name>
<keyword id="KW-0143">Chaperone</keyword>
<keyword id="KW-0963">Cytoplasm</keyword>
<keyword id="KW-0342">GTP-binding</keyword>
<keyword id="KW-0996">Nickel insertion</keyword>
<keyword id="KW-0547">Nucleotide-binding</keyword>
<feature type="chain" id="PRO_1000145203" description="Urease accessory protein UreG">
    <location>
        <begin position="1"/>
        <end position="204"/>
    </location>
</feature>
<feature type="binding site" evidence="1">
    <location>
        <begin position="12"/>
        <end position="19"/>
    </location>
    <ligand>
        <name>GTP</name>
        <dbReference type="ChEBI" id="CHEBI:37565"/>
    </ligand>
</feature>
<accession>A6VD02</accession>
<evidence type="ECO:0000255" key="1">
    <source>
        <dbReference type="HAMAP-Rule" id="MF_01389"/>
    </source>
</evidence>
<gene>
    <name evidence="1" type="primary">ureG</name>
    <name type="ordered locus">PSPA7_5616</name>
</gene>
<organism>
    <name type="scientific">Pseudomonas paraeruginosa (strain DSM 24068 / PA7)</name>
    <name type="common">Pseudomonas aeruginosa (strain PA7)</name>
    <dbReference type="NCBI Taxonomy" id="381754"/>
    <lineage>
        <taxon>Bacteria</taxon>
        <taxon>Pseudomonadati</taxon>
        <taxon>Pseudomonadota</taxon>
        <taxon>Gammaproteobacteria</taxon>
        <taxon>Pseudomonadales</taxon>
        <taxon>Pseudomonadaceae</taxon>
        <taxon>Pseudomonas</taxon>
        <taxon>Pseudomonas paraeruginosa</taxon>
    </lineage>
</organism>